<sequence>MAAPKGSLWVRTQLGLPPLLLLTMALAGGSGTASAEAFDSVLGDTASCHRACQLTYPLHTYPKEEELYACQRGCRLFSICQFVDDGIDLNRTKLECESACTEAYSQSDEQYACHLGCQNQLPFAELRQEQLMSLMPKMHLLFPLTLVRSFWSDVMDSAQSFITSSWTFYLQADDGKIVIFQSKPEIQYAPHLEQEPTNLRESSLSKMSYLQMRNSQVHRNFLEDGESDGFLRCLSLNSGWILTTTLVLSVMVLLWICCATVATAVEQYVPSEKLSIYGDLEFMNEQKLNRYPASSLVVVRSKTEDHEEAGPLPTKVNLAHSEI</sequence>
<name>TMM59_PONAB</name>
<evidence type="ECO:0000250" key="1">
    <source>
        <dbReference type="UniProtKB" id="Q9BXS4"/>
    </source>
</evidence>
<evidence type="ECO:0000250" key="2">
    <source>
        <dbReference type="UniProtKB" id="Q9QY73"/>
    </source>
</evidence>
<evidence type="ECO:0000255" key="3"/>
<evidence type="ECO:0000305" key="4"/>
<keyword id="KW-0072">Autophagy</keyword>
<keyword id="KW-1003">Cell membrane</keyword>
<keyword id="KW-0967">Endosome</keyword>
<keyword id="KW-0325">Glycoprotein</keyword>
<keyword id="KW-0333">Golgi apparatus</keyword>
<keyword id="KW-0458">Lysosome</keyword>
<keyword id="KW-0472">Membrane</keyword>
<keyword id="KW-0597">Phosphoprotein</keyword>
<keyword id="KW-1185">Reference proteome</keyword>
<keyword id="KW-0732">Signal</keyword>
<keyword id="KW-0812">Transmembrane</keyword>
<keyword id="KW-1133">Transmembrane helix</keyword>
<accession>Q5R800</accession>
<dbReference type="EMBL" id="CR859956">
    <property type="protein sequence ID" value="CAH92110.1"/>
    <property type="molecule type" value="mRNA"/>
</dbReference>
<dbReference type="RefSeq" id="NP_001126232.1">
    <property type="nucleotide sequence ID" value="NM_001132760.1"/>
</dbReference>
<dbReference type="FunCoup" id="Q5R800">
    <property type="interactions" value="790"/>
</dbReference>
<dbReference type="STRING" id="9601.ENSPPYP00000001540"/>
<dbReference type="GlyCosmos" id="Q5R800">
    <property type="glycosylation" value="1 site, No reported glycans"/>
</dbReference>
<dbReference type="GeneID" id="100173202"/>
<dbReference type="KEGG" id="pon:100173202"/>
<dbReference type="CTD" id="9528"/>
<dbReference type="eggNOG" id="ENOG502QUIS">
    <property type="taxonomic scope" value="Eukaryota"/>
</dbReference>
<dbReference type="InParanoid" id="Q5R800"/>
<dbReference type="OrthoDB" id="6371519at2759"/>
<dbReference type="Proteomes" id="UP000001595">
    <property type="component" value="Unplaced"/>
</dbReference>
<dbReference type="GO" id="GO:0000139">
    <property type="term" value="C:Golgi membrane"/>
    <property type="evidence" value="ECO:0007669"/>
    <property type="project" value="UniProtKB-SubCell"/>
</dbReference>
<dbReference type="GO" id="GO:0005770">
    <property type="term" value="C:late endosome"/>
    <property type="evidence" value="ECO:0000250"/>
    <property type="project" value="UniProtKB"/>
</dbReference>
<dbReference type="GO" id="GO:0031902">
    <property type="term" value="C:late endosome membrane"/>
    <property type="evidence" value="ECO:0007669"/>
    <property type="project" value="UniProtKB-SubCell"/>
</dbReference>
<dbReference type="GO" id="GO:0005765">
    <property type="term" value="C:lysosomal membrane"/>
    <property type="evidence" value="ECO:0007669"/>
    <property type="project" value="UniProtKB-SubCell"/>
</dbReference>
<dbReference type="GO" id="GO:0005764">
    <property type="term" value="C:lysosome"/>
    <property type="evidence" value="ECO:0000250"/>
    <property type="project" value="UniProtKB"/>
</dbReference>
<dbReference type="GO" id="GO:0005886">
    <property type="term" value="C:plasma membrane"/>
    <property type="evidence" value="ECO:0007669"/>
    <property type="project" value="UniProtKB-SubCell"/>
</dbReference>
<dbReference type="GO" id="GO:0006914">
    <property type="term" value="P:autophagy"/>
    <property type="evidence" value="ECO:0007669"/>
    <property type="project" value="UniProtKB-KW"/>
</dbReference>
<dbReference type="GO" id="GO:0010508">
    <property type="term" value="P:positive regulation of autophagy"/>
    <property type="evidence" value="ECO:0000250"/>
    <property type="project" value="UniProtKB"/>
</dbReference>
<dbReference type="InterPro" id="IPR022065">
    <property type="entry name" value="Uncharacterised_TMEM59"/>
</dbReference>
<dbReference type="PANTHER" id="PTHR28652:SF3">
    <property type="entry name" value="TRANSMEMBRANE PROTEIN 59"/>
    <property type="match status" value="1"/>
</dbReference>
<dbReference type="PANTHER" id="PTHR28652">
    <property type="entry name" value="TRANSMEMBRANE PROTEIN 59-LIKE PROTEIN"/>
    <property type="match status" value="1"/>
</dbReference>
<dbReference type="Pfam" id="PF12280">
    <property type="entry name" value="BSMAP"/>
    <property type="match status" value="1"/>
</dbReference>
<gene>
    <name type="primary">TMEM59</name>
</gene>
<feature type="signal peptide" evidence="3">
    <location>
        <begin position="1"/>
        <end position="35"/>
    </location>
</feature>
<feature type="chain" id="PRO_0000282919" description="Transmembrane protein 59">
    <location>
        <begin position="36"/>
        <end position="323"/>
    </location>
</feature>
<feature type="topological domain" description="Extracellular" evidence="3">
    <location>
        <begin position="36"/>
        <end position="238"/>
    </location>
</feature>
<feature type="transmembrane region" description="Helical" evidence="3">
    <location>
        <begin position="239"/>
        <end position="259"/>
    </location>
</feature>
<feature type="topological domain" description="Cytoplasmic" evidence="3">
    <location>
        <begin position="260"/>
        <end position="323"/>
    </location>
</feature>
<feature type="short sequence motif" description="ATG16L1-binding motif" evidence="1">
    <location>
        <begin position="263"/>
        <end position="281"/>
    </location>
</feature>
<feature type="modified residue" description="Phosphothreonine" evidence="2">
    <location>
        <position position="303"/>
    </location>
</feature>
<feature type="glycosylation site" description="N-linked (GlcNAc...) asparagine" evidence="3">
    <location>
        <position position="90"/>
    </location>
</feature>
<comment type="function">
    <text evidence="1">Acts as a regulator of autophagy in response to S.aureus infection by promoting activation of LC3 (MAP1LC3A, MAP1LC3B or MAP1LC3C). Acts by interacting with ATG16L1, leading to promote a functional complex between LC3 and ATG16L1 and promoting LC3 lipidation and subsequent activation of autophagy. Modulates the O-glycosylation and complex N-glycosylation steps occurring during the Golgi maturation of several proteins such as APP, BACE1, SEAP or PRNP. Inhibits APP transport to the cell surface and further shedding.</text>
</comment>
<comment type="subunit">
    <text evidence="1">Interacts with ATG16L1 (via WD repeats).</text>
</comment>
<comment type="subcellular location">
    <subcellularLocation>
        <location evidence="1">Late endosome membrane</location>
        <topology evidence="3">Single-pass type I membrane protein</topology>
    </subcellularLocation>
    <subcellularLocation>
        <location evidence="1">Lysosome membrane</location>
        <topology evidence="3">Single-pass type I membrane protein</topology>
    </subcellularLocation>
    <subcellularLocation>
        <location evidence="1">Cell membrane</location>
        <topology evidence="3">Single-pass type I membrane protein</topology>
    </subcellularLocation>
    <subcellularLocation>
        <location evidence="1">Golgi apparatus membrane</location>
        <topology evidence="3">Single-pass type I membrane protein</topology>
    </subcellularLocation>
    <text evidence="1">Mainly localizes to late endosomes/lysosomes. Probably first exported to the cell surface and then actively endocytosed to transiently localize in early endosomes on its way to the late endosomal/lysosomal compartment where it becomes quickly degraded.</text>
</comment>
<comment type="domain">
    <text evidence="1">The ATG16L1-binding motif mediates interaction with ATG16L1 and promotes autophagy.</text>
</comment>
<comment type="PTM">
    <text evidence="1">N-glycosylated.</text>
</comment>
<comment type="similarity">
    <text evidence="4">Belongs to the TMEM59 family.</text>
</comment>
<proteinExistence type="evidence at transcript level"/>
<protein>
    <recommendedName>
        <fullName>Transmembrane protein 59</fullName>
    </recommendedName>
</protein>
<reference key="1">
    <citation type="submission" date="2004-11" db="EMBL/GenBank/DDBJ databases">
        <authorList>
            <consortium name="The German cDNA consortium"/>
        </authorList>
    </citation>
    <scope>NUCLEOTIDE SEQUENCE [LARGE SCALE MRNA]</scope>
    <source>
        <tissue>Kidney</tissue>
    </source>
</reference>
<organism>
    <name type="scientific">Pongo abelii</name>
    <name type="common">Sumatran orangutan</name>
    <name type="synonym">Pongo pygmaeus abelii</name>
    <dbReference type="NCBI Taxonomy" id="9601"/>
    <lineage>
        <taxon>Eukaryota</taxon>
        <taxon>Metazoa</taxon>
        <taxon>Chordata</taxon>
        <taxon>Craniata</taxon>
        <taxon>Vertebrata</taxon>
        <taxon>Euteleostomi</taxon>
        <taxon>Mammalia</taxon>
        <taxon>Eutheria</taxon>
        <taxon>Euarchontoglires</taxon>
        <taxon>Primates</taxon>
        <taxon>Haplorrhini</taxon>
        <taxon>Catarrhini</taxon>
        <taxon>Hominidae</taxon>
        <taxon>Pongo</taxon>
    </lineage>
</organism>